<keyword id="KW-0520">NAD</keyword>
<keyword id="KW-0560">Oxidoreductase</keyword>
<accession>Q6ZZF4</accession>
<protein>
    <recommendedName>
        <fullName>Glycerol-3-phosphate dehydrogenase [NAD(+)] 1</fullName>
        <ecNumber>1.1.1.8</ecNumber>
    </recommendedName>
</protein>
<comment type="catalytic activity">
    <reaction>
        <text>sn-glycerol 3-phosphate + NAD(+) = dihydroxyacetone phosphate + NADH + H(+)</text>
        <dbReference type="Rhea" id="RHEA:11092"/>
        <dbReference type="ChEBI" id="CHEBI:15378"/>
        <dbReference type="ChEBI" id="CHEBI:57540"/>
        <dbReference type="ChEBI" id="CHEBI:57597"/>
        <dbReference type="ChEBI" id="CHEBI:57642"/>
        <dbReference type="ChEBI" id="CHEBI:57945"/>
        <dbReference type="EC" id="1.1.1.8"/>
    </reaction>
</comment>
<comment type="similarity">
    <text evidence="2">Belongs to the NAD-dependent glycerol-3-phosphate dehydrogenase family.</text>
</comment>
<organism>
    <name type="scientific">Cyberlindnera jadinii</name>
    <name type="common">Torula yeast</name>
    <name type="synonym">Pichia jadinii</name>
    <dbReference type="NCBI Taxonomy" id="4903"/>
    <lineage>
        <taxon>Eukaryota</taxon>
        <taxon>Fungi</taxon>
        <taxon>Dikarya</taxon>
        <taxon>Ascomycota</taxon>
        <taxon>Saccharomycotina</taxon>
        <taxon>Saccharomycetes</taxon>
        <taxon>Phaffomycetales</taxon>
        <taxon>Phaffomycetaceae</taxon>
        <taxon>Cyberlindnera</taxon>
    </lineage>
</organism>
<feature type="chain" id="PRO_0000138093" description="Glycerol-3-phosphate dehydrogenase [NAD(+)] 1">
    <location>
        <begin position="1"/>
        <end position="393"/>
    </location>
</feature>
<feature type="active site" description="Proton acceptor" evidence="1">
    <location>
        <position position="250"/>
    </location>
</feature>
<feature type="binding site" evidence="1">
    <location>
        <begin position="45"/>
        <end position="50"/>
    </location>
    <ligand>
        <name>NAD(+)</name>
        <dbReference type="ChEBI" id="CHEBI:57540"/>
    </ligand>
</feature>
<feature type="binding site" evidence="1">
    <location>
        <position position="133"/>
    </location>
    <ligand>
        <name>NAD(+)</name>
        <dbReference type="ChEBI" id="CHEBI:57540"/>
    </ligand>
</feature>
<feature type="binding site" evidence="1">
    <location>
        <position position="157"/>
    </location>
    <ligand>
        <name>NAD(+)</name>
        <dbReference type="ChEBI" id="CHEBI:57540"/>
    </ligand>
</feature>
<feature type="binding site" evidence="1">
    <location>
        <position position="157"/>
    </location>
    <ligand>
        <name>substrate</name>
    </ligand>
</feature>
<feature type="binding site" evidence="1">
    <location>
        <position position="190"/>
    </location>
    <ligand>
        <name>NAD(+)</name>
        <dbReference type="ChEBI" id="CHEBI:57540"/>
    </ligand>
</feature>
<feature type="binding site" evidence="1">
    <location>
        <begin position="316"/>
        <end position="317"/>
    </location>
    <ligand>
        <name>substrate</name>
    </ligand>
</feature>
<feature type="binding site" evidence="1">
    <location>
        <position position="316"/>
    </location>
    <ligand>
        <name>NAD(+)</name>
        <dbReference type="ChEBI" id="CHEBI:57540"/>
    </ligand>
</feature>
<feature type="binding site" evidence="1">
    <location>
        <position position="345"/>
    </location>
    <ligand>
        <name>NAD(+)</name>
        <dbReference type="ChEBI" id="CHEBI:57540"/>
    </ligand>
</feature>
<proteinExistence type="inferred from homology"/>
<dbReference type="EC" id="1.1.1.8"/>
<dbReference type="EMBL" id="AJ632339">
    <property type="protein sequence ID" value="CAG15347.1"/>
    <property type="molecule type" value="Genomic_DNA"/>
</dbReference>
<dbReference type="EMBL" id="AJ632341">
    <property type="protein sequence ID" value="CAG15350.1"/>
    <property type="molecule type" value="Genomic_DNA"/>
</dbReference>
<dbReference type="SMR" id="Q6ZZF4"/>
<dbReference type="GO" id="GO:0005829">
    <property type="term" value="C:cytosol"/>
    <property type="evidence" value="ECO:0007669"/>
    <property type="project" value="TreeGrafter"/>
</dbReference>
<dbReference type="GO" id="GO:0005634">
    <property type="term" value="C:nucleus"/>
    <property type="evidence" value="ECO:0007669"/>
    <property type="project" value="TreeGrafter"/>
</dbReference>
<dbReference type="GO" id="GO:0141152">
    <property type="term" value="F:glycerol-3-phosphate dehydrogenase (NAD+) activity"/>
    <property type="evidence" value="ECO:0007669"/>
    <property type="project" value="UniProtKB-EC"/>
</dbReference>
<dbReference type="GO" id="GO:0051287">
    <property type="term" value="F:NAD binding"/>
    <property type="evidence" value="ECO:0007669"/>
    <property type="project" value="InterPro"/>
</dbReference>
<dbReference type="GO" id="GO:0042803">
    <property type="term" value="F:protein homodimerization activity"/>
    <property type="evidence" value="ECO:0007669"/>
    <property type="project" value="InterPro"/>
</dbReference>
<dbReference type="GO" id="GO:0005975">
    <property type="term" value="P:carbohydrate metabolic process"/>
    <property type="evidence" value="ECO:0007669"/>
    <property type="project" value="InterPro"/>
</dbReference>
<dbReference type="GO" id="GO:0046168">
    <property type="term" value="P:glycerol-3-phosphate catabolic process"/>
    <property type="evidence" value="ECO:0007669"/>
    <property type="project" value="InterPro"/>
</dbReference>
<dbReference type="FunFam" id="1.10.1040.10:FF:000004">
    <property type="entry name" value="Glycerol-3-phosphate dehydrogenase [NAD(+)]"/>
    <property type="match status" value="1"/>
</dbReference>
<dbReference type="Gene3D" id="1.10.1040.10">
    <property type="entry name" value="N-(1-d-carboxylethyl)-l-norvaline Dehydrogenase, domain 2"/>
    <property type="match status" value="1"/>
</dbReference>
<dbReference type="Gene3D" id="3.40.50.720">
    <property type="entry name" value="NAD(P)-binding Rossmann-like Domain"/>
    <property type="match status" value="1"/>
</dbReference>
<dbReference type="InterPro" id="IPR008927">
    <property type="entry name" value="6-PGluconate_DH-like_C_sf"/>
</dbReference>
<dbReference type="InterPro" id="IPR013328">
    <property type="entry name" value="6PGD_dom2"/>
</dbReference>
<dbReference type="InterPro" id="IPR006168">
    <property type="entry name" value="G3P_DH_NAD-dep"/>
</dbReference>
<dbReference type="InterPro" id="IPR006109">
    <property type="entry name" value="G3P_DH_NAD-dep_C"/>
</dbReference>
<dbReference type="InterPro" id="IPR017751">
    <property type="entry name" value="G3P_DH_NAD-dep_euk"/>
</dbReference>
<dbReference type="InterPro" id="IPR011128">
    <property type="entry name" value="G3P_DH_NAD-dep_N"/>
</dbReference>
<dbReference type="InterPro" id="IPR036291">
    <property type="entry name" value="NAD(P)-bd_dom_sf"/>
</dbReference>
<dbReference type="NCBIfam" id="TIGR03376">
    <property type="entry name" value="glycerol3P_DH"/>
    <property type="match status" value="1"/>
</dbReference>
<dbReference type="PANTHER" id="PTHR11728">
    <property type="entry name" value="GLYCEROL-3-PHOSPHATE DEHYDROGENASE"/>
    <property type="match status" value="1"/>
</dbReference>
<dbReference type="PANTHER" id="PTHR11728:SF8">
    <property type="entry name" value="GLYCEROL-3-PHOSPHATE DEHYDROGENASE [NAD(+)]-RELATED"/>
    <property type="match status" value="1"/>
</dbReference>
<dbReference type="Pfam" id="PF07479">
    <property type="entry name" value="NAD_Gly3P_dh_C"/>
    <property type="match status" value="1"/>
</dbReference>
<dbReference type="Pfam" id="PF01210">
    <property type="entry name" value="NAD_Gly3P_dh_N"/>
    <property type="match status" value="1"/>
</dbReference>
<dbReference type="PIRSF" id="PIRSF000114">
    <property type="entry name" value="Glycerol-3-P_dh"/>
    <property type="match status" value="1"/>
</dbReference>
<dbReference type="PRINTS" id="PR00077">
    <property type="entry name" value="GPDHDRGNASE"/>
</dbReference>
<dbReference type="SUPFAM" id="SSF48179">
    <property type="entry name" value="6-phosphogluconate dehydrogenase C-terminal domain-like"/>
    <property type="match status" value="1"/>
</dbReference>
<dbReference type="SUPFAM" id="SSF51735">
    <property type="entry name" value="NAD(P)-binding Rossmann-fold domains"/>
    <property type="match status" value="1"/>
</dbReference>
<dbReference type="PROSITE" id="PS00957">
    <property type="entry name" value="NAD_G3PDH"/>
    <property type="match status" value="1"/>
</dbReference>
<sequence>MLRIGKLNLSTMSSAQQRLAQVGSHLTAQKQSLAPQRPYKITVIGSGNWGTTIAKVLAENAGLRPHLFQHQVDMWVFEEKINGVNLTEIINTQHENVKYLPGIKLPKNLHAEPSIVKAAEGADLLVFNIPHQFLPGICKQLSKATLKPHVRAISCLKGLEVTPNGCKLLSTYITEHLGVHCGALSGANLAPEVAKEKWSETTVAYRLPNDFQGHGKDIDRYVLRAAFHRPYFHVRVIEDVAGVSLAGALKNVVALGVGFVHGLNWGDNAASAIQRFGLNETIKFAEVFFPGETNQDTFTKESAGVADLITTCSGGRNVRVAKAMAITGKSAVEVERELLNGQSAQGIITSKEVHELLAAKNLTKEFPLFEAIYQIVYGTESIERLPELIEEDE</sequence>
<evidence type="ECO:0000250" key="1"/>
<evidence type="ECO:0000305" key="2"/>
<gene>
    <name type="primary">gpd1</name>
</gene>
<reference key="1">
    <citation type="journal article" date="2006" name="DNA Seq.">
        <title>Identification of the genes GPD1 and GPD2 of Pichia jadinii.</title>
        <authorList>
            <person name="Ostermann K."/>
            <person name="Richter M."/>
            <person name="Zscharnack M."/>
            <person name="Rothe R."/>
            <person name="Walther T."/>
            <person name="Roedel G."/>
        </authorList>
    </citation>
    <scope>NUCLEOTIDE SEQUENCE [GENOMIC DNA]</scope>
    <source>
        <strain>ATCC 9950 / CBS 5609 / DSM 2361 / NBRC 0998 / NRRL Y-900</strain>
    </source>
</reference>
<name>GPD1_CYBJA</name>